<name>BLO3_PSEAI</name>
<evidence type="ECO:0000250" key="1"/>
<evidence type="ECO:0000255" key="2">
    <source>
        <dbReference type="PROSITE-ProRule" id="PRU10103"/>
    </source>
</evidence>
<evidence type="ECO:0000305" key="3"/>
<dbReference type="EC" id="3.5.2.6"/>
<dbReference type="EMBL" id="L07945">
    <property type="protein sequence ID" value="AAC41449.1"/>
    <property type="molecule type" value="Genomic_DNA"/>
</dbReference>
<dbReference type="RefSeq" id="WP_063862540.1">
    <property type="nucleotide sequence ID" value="NG_049595.1"/>
</dbReference>
<dbReference type="SMR" id="Q51429"/>
<dbReference type="CARD" id="ARO:3001398">
    <property type="molecule name" value="OXA-3"/>
    <property type="mechanism identifier" value="ARO:0001004"/>
    <property type="mechanism name" value="antibiotic inactivation"/>
</dbReference>
<dbReference type="KEGG" id="ag:AAC41449"/>
<dbReference type="GO" id="GO:0008800">
    <property type="term" value="F:beta-lactamase activity"/>
    <property type="evidence" value="ECO:0007669"/>
    <property type="project" value="UniProtKB-EC"/>
</dbReference>
<dbReference type="GO" id="GO:0008658">
    <property type="term" value="F:penicillin binding"/>
    <property type="evidence" value="ECO:0007669"/>
    <property type="project" value="InterPro"/>
</dbReference>
<dbReference type="GO" id="GO:0017001">
    <property type="term" value="P:antibiotic catabolic process"/>
    <property type="evidence" value="ECO:0007669"/>
    <property type="project" value="InterPro"/>
</dbReference>
<dbReference type="GO" id="GO:0046677">
    <property type="term" value="P:response to antibiotic"/>
    <property type="evidence" value="ECO:0007669"/>
    <property type="project" value="UniProtKB-KW"/>
</dbReference>
<dbReference type="Gene3D" id="3.40.710.10">
    <property type="entry name" value="DD-peptidase/beta-lactamase superfamily"/>
    <property type="match status" value="1"/>
</dbReference>
<dbReference type="InterPro" id="IPR012338">
    <property type="entry name" value="Beta-lactam/transpept-like"/>
</dbReference>
<dbReference type="InterPro" id="IPR002137">
    <property type="entry name" value="Beta-lactam_class-D_AS"/>
</dbReference>
<dbReference type="InterPro" id="IPR001460">
    <property type="entry name" value="PCN-bd_Tpept"/>
</dbReference>
<dbReference type="NCBIfam" id="NF012161">
    <property type="entry name" value="bla_class_D_main"/>
    <property type="match status" value="1"/>
</dbReference>
<dbReference type="NCBIfam" id="NF000267">
    <property type="entry name" value="blaOXA-2_like"/>
    <property type="match status" value="1"/>
</dbReference>
<dbReference type="Pfam" id="PF00905">
    <property type="entry name" value="Transpeptidase"/>
    <property type="match status" value="1"/>
</dbReference>
<dbReference type="SUPFAM" id="SSF56601">
    <property type="entry name" value="beta-lactamase/transpeptidase-like"/>
    <property type="match status" value="1"/>
</dbReference>
<dbReference type="PROSITE" id="PS00337">
    <property type="entry name" value="BETA_LACTAMASE_D"/>
    <property type="match status" value="1"/>
</dbReference>
<sequence>MAIRIFAILFSTFVFGTFAHAQEGMRERSDWRKFFSEFQAKGTIVVADERQTDRVILVFDQVRSEKRYSPASTFKIPHTLFALDAGAARDEFQVFRWDGIKRSFAAHNQDQDLRSAMRNSTVWIYELFAKEIGEDKARRYLKQIDYGNADPSTSNGDYWIDGNLAIAAQEQIAFLRKLYHNELPFRVEHQRLVKDLMIVEAGRNWILRAKTGWEGRIGWWVGWVEWPTGPVFFALNIDTPNRMDDLFKREAIVRAILRSIEALPPNPAVNSDAAR</sequence>
<organism>
    <name type="scientific">Pseudomonas aeruginosa</name>
    <dbReference type="NCBI Taxonomy" id="287"/>
    <lineage>
        <taxon>Bacteria</taxon>
        <taxon>Pseudomonadati</taxon>
        <taxon>Pseudomonadota</taxon>
        <taxon>Gammaproteobacteria</taxon>
        <taxon>Pseudomonadales</taxon>
        <taxon>Pseudomonadaceae</taxon>
        <taxon>Pseudomonas</taxon>
    </lineage>
</organism>
<comment type="function">
    <text>This is an oxacillin-hydrolyzing beta-lactamase.</text>
</comment>
<comment type="catalytic activity">
    <reaction evidence="2">
        <text>a beta-lactam + H2O = a substituted beta-amino acid</text>
        <dbReference type="Rhea" id="RHEA:20401"/>
        <dbReference type="ChEBI" id="CHEBI:15377"/>
        <dbReference type="ChEBI" id="CHEBI:35627"/>
        <dbReference type="ChEBI" id="CHEBI:140347"/>
        <dbReference type="EC" id="3.5.2.6"/>
    </reaction>
</comment>
<comment type="similarity">
    <text evidence="3">Belongs to the class-D beta-lactamase family.</text>
</comment>
<geneLocation type="plasmid">
    <name>pMG25</name>
</geneLocation>
<proteinExistence type="inferred from homology"/>
<gene>
    <name type="primary">bla</name>
    <name type="synonym">oxa3</name>
</gene>
<keyword id="KW-0046">Antibiotic resistance</keyword>
<keyword id="KW-0378">Hydrolase</keyword>
<keyword id="KW-0614">Plasmid</keyword>
<keyword id="KW-0732">Signal</keyword>
<feature type="signal peptide" evidence="1">
    <location>
        <begin position="1"/>
        <end position="21"/>
    </location>
</feature>
<feature type="chain" id="PRO_0000017027" description="Beta-lactamase OXA-3">
    <location>
        <begin position="22"/>
        <end position="275"/>
    </location>
</feature>
<feature type="active site" description="Acyl-ester intermediate" evidence="2">
    <location>
        <position position="72"/>
    </location>
</feature>
<feature type="binding site" evidence="1">
    <location>
        <begin position="210"/>
        <end position="212"/>
    </location>
    <ligand>
        <name>substrate</name>
    </ligand>
</feature>
<feature type="modified residue" description="N6-carboxylysine" evidence="1">
    <location>
        <position position="75"/>
    </location>
</feature>
<accession>Q51429</accession>
<reference key="1">
    <citation type="journal article" date="1995" name="Antimicrob. Agents Chemother.">
        <title>Primary structure of OXA-3 and phylogeny of oxacillin-hydrolyzing class D beta-lactamases.</title>
        <authorList>
            <person name="Sanschagrin F."/>
            <person name="Couture F."/>
            <person name="Levesque R.C."/>
        </authorList>
    </citation>
    <scope>NUCLEOTIDE SEQUENCE [GENOMIC DNA]</scope>
</reference>
<protein>
    <recommendedName>
        <fullName>Beta-lactamase OXA-3</fullName>
        <ecNumber>3.5.2.6</ecNumber>
    </recommendedName>
    <alternativeName>
        <fullName>Penicillinase</fullName>
    </alternativeName>
</protein>